<organism>
    <name type="scientific">Borrelia turicatae (strain 91E135)</name>
    <dbReference type="NCBI Taxonomy" id="314724"/>
    <lineage>
        <taxon>Bacteria</taxon>
        <taxon>Pseudomonadati</taxon>
        <taxon>Spirochaetota</taxon>
        <taxon>Spirochaetia</taxon>
        <taxon>Spirochaetales</taxon>
        <taxon>Borreliaceae</taxon>
        <taxon>Borrelia</taxon>
    </lineage>
</organism>
<evidence type="ECO:0000255" key="1">
    <source>
        <dbReference type="HAMAP-Rule" id="MF_00531"/>
    </source>
</evidence>
<evidence type="ECO:0000305" key="2"/>
<dbReference type="EMBL" id="CP000049">
    <property type="protein sequence ID" value="AAX17810.1"/>
    <property type="molecule type" value="Genomic_DNA"/>
</dbReference>
<dbReference type="RefSeq" id="WP_011772429.1">
    <property type="nucleotide sequence ID" value="NZ_CP073176.1"/>
</dbReference>
<dbReference type="SMR" id="A1QZR8"/>
<dbReference type="GeneID" id="71843300"/>
<dbReference type="KEGG" id="btu:BT0482"/>
<dbReference type="eggNOG" id="COG0185">
    <property type="taxonomic scope" value="Bacteria"/>
</dbReference>
<dbReference type="HOGENOM" id="CLU_144911_0_1_12"/>
<dbReference type="Proteomes" id="UP000001205">
    <property type="component" value="Chromosome"/>
</dbReference>
<dbReference type="GO" id="GO:0005737">
    <property type="term" value="C:cytoplasm"/>
    <property type="evidence" value="ECO:0007669"/>
    <property type="project" value="UniProtKB-ARBA"/>
</dbReference>
<dbReference type="GO" id="GO:0015935">
    <property type="term" value="C:small ribosomal subunit"/>
    <property type="evidence" value="ECO:0007669"/>
    <property type="project" value="InterPro"/>
</dbReference>
<dbReference type="GO" id="GO:0019843">
    <property type="term" value="F:rRNA binding"/>
    <property type="evidence" value="ECO:0007669"/>
    <property type="project" value="UniProtKB-UniRule"/>
</dbReference>
<dbReference type="GO" id="GO:0003735">
    <property type="term" value="F:structural constituent of ribosome"/>
    <property type="evidence" value="ECO:0007669"/>
    <property type="project" value="InterPro"/>
</dbReference>
<dbReference type="GO" id="GO:0000028">
    <property type="term" value="P:ribosomal small subunit assembly"/>
    <property type="evidence" value="ECO:0007669"/>
    <property type="project" value="TreeGrafter"/>
</dbReference>
<dbReference type="GO" id="GO:0006412">
    <property type="term" value="P:translation"/>
    <property type="evidence" value="ECO:0007669"/>
    <property type="project" value="UniProtKB-UniRule"/>
</dbReference>
<dbReference type="FunFam" id="3.30.860.10:FF:000001">
    <property type="entry name" value="30S ribosomal protein S19"/>
    <property type="match status" value="1"/>
</dbReference>
<dbReference type="Gene3D" id="3.30.860.10">
    <property type="entry name" value="30s Ribosomal Protein S19, Chain A"/>
    <property type="match status" value="1"/>
</dbReference>
<dbReference type="HAMAP" id="MF_00531">
    <property type="entry name" value="Ribosomal_uS19"/>
    <property type="match status" value="1"/>
</dbReference>
<dbReference type="InterPro" id="IPR002222">
    <property type="entry name" value="Ribosomal_uS19"/>
</dbReference>
<dbReference type="InterPro" id="IPR005732">
    <property type="entry name" value="Ribosomal_uS19_bac-type"/>
</dbReference>
<dbReference type="InterPro" id="IPR020934">
    <property type="entry name" value="Ribosomal_uS19_CS"/>
</dbReference>
<dbReference type="InterPro" id="IPR023575">
    <property type="entry name" value="Ribosomal_uS19_SF"/>
</dbReference>
<dbReference type="NCBIfam" id="TIGR01050">
    <property type="entry name" value="rpsS_bact"/>
    <property type="match status" value="1"/>
</dbReference>
<dbReference type="PANTHER" id="PTHR11880">
    <property type="entry name" value="RIBOSOMAL PROTEIN S19P FAMILY MEMBER"/>
    <property type="match status" value="1"/>
</dbReference>
<dbReference type="PANTHER" id="PTHR11880:SF8">
    <property type="entry name" value="SMALL RIBOSOMAL SUBUNIT PROTEIN US19M"/>
    <property type="match status" value="1"/>
</dbReference>
<dbReference type="Pfam" id="PF00203">
    <property type="entry name" value="Ribosomal_S19"/>
    <property type="match status" value="1"/>
</dbReference>
<dbReference type="PIRSF" id="PIRSF002144">
    <property type="entry name" value="Ribosomal_S19"/>
    <property type="match status" value="1"/>
</dbReference>
<dbReference type="PRINTS" id="PR00975">
    <property type="entry name" value="RIBOSOMALS19"/>
</dbReference>
<dbReference type="SUPFAM" id="SSF54570">
    <property type="entry name" value="Ribosomal protein S19"/>
    <property type="match status" value="1"/>
</dbReference>
<dbReference type="PROSITE" id="PS00323">
    <property type="entry name" value="RIBOSOMAL_S19"/>
    <property type="match status" value="1"/>
</dbReference>
<comment type="function">
    <text evidence="1">Protein S19 forms a complex with S13 that binds strongly to the 16S ribosomal RNA.</text>
</comment>
<comment type="similarity">
    <text evidence="1">Belongs to the universal ribosomal protein uS19 family.</text>
</comment>
<sequence>MARSIKKGPFIEKSLYQKVLASSGREKRVVIKTYSRASTIIPEMVSLTISVYNGKSFIPVYITEDLVGHKLGEFSPTRIFRGHAKSDKKGRK</sequence>
<proteinExistence type="inferred from homology"/>
<feature type="chain" id="PRO_1000146370" description="Small ribosomal subunit protein uS19">
    <location>
        <begin position="1"/>
        <end position="92"/>
    </location>
</feature>
<keyword id="KW-1185">Reference proteome</keyword>
<keyword id="KW-0687">Ribonucleoprotein</keyword>
<keyword id="KW-0689">Ribosomal protein</keyword>
<keyword id="KW-0694">RNA-binding</keyword>
<keyword id="KW-0699">rRNA-binding</keyword>
<reference key="1">
    <citation type="submission" date="2004-12" db="EMBL/GenBank/DDBJ databases">
        <title>The genome sequence of Borrelia hermsii and Borrelia turicatae: comparative analysis of two agents of endemic N. America relapsing fever.</title>
        <authorList>
            <person name="Porcella S.F."/>
            <person name="Raffel S.J."/>
            <person name="Schrumpf M.E."/>
            <person name="Montgomery B."/>
            <person name="Smith T."/>
            <person name="Schwan T.G."/>
        </authorList>
    </citation>
    <scope>NUCLEOTIDE SEQUENCE [LARGE SCALE GENOMIC DNA]</scope>
    <source>
        <strain>91E135</strain>
    </source>
</reference>
<accession>A1QZR8</accession>
<name>RS19_BORT9</name>
<protein>
    <recommendedName>
        <fullName evidence="1">Small ribosomal subunit protein uS19</fullName>
    </recommendedName>
    <alternativeName>
        <fullName evidence="2">30S ribosomal protein S19</fullName>
    </alternativeName>
</protein>
<gene>
    <name evidence="1" type="primary">rpsS</name>
    <name type="ordered locus">BT0482</name>
</gene>